<keyword id="KW-0193">Cuticle</keyword>
<keyword id="KW-0903">Direct protein sequencing</keyword>
<keyword id="KW-0677">Repeat</keyword>
<reference key="1">
    <citation type="journal article" date="1986" name="Eur. J. Biochem.">
        <title>Isolation, characterization, and N-terminal sequence studies of cuticular proteins from the migratory locust, Locusta migratoria.</title>
        <authorList>
            <person name="Hoejrup P."/>
            <person name="Andersen S.O."/>
            <person name="Roepstorff P."/>
        </authorList>
    </citation>
    <scope>PROTEIN SEQUENCE</scope>
</reference>
<feature type="chain" id="PRO_0000196106" description="Cuticle protein 54">
    <location>
        <begin position="1"/>
        <end position="31" status="greater than"/>
    </location>
</feature>
<feature type="repeat" description="1">
    <location>
        <begin position="7"/>
        <end position="10"/>
    </location>
</feature>
<feature type="repeat" description="2">
    <location>
        <begin position="13"/>
        <end position="17"/>
    </location>
</feature>
<feature type="non-terminal residue">
    <location>
        <position position="31"/>
    </location>
</feature>
<comment type="function">
    <text>Component of the cuticle of migratory locust which contains more than 100 different structural proteins.</text>
</comment>
<comment type="domain">
    <text>The tetrapeptide (A-A-P-[AV]) repeats found throughout the protein are also present in many proteins constituting the protective envelope of other species.</text>
</comment>
<name>CU54_LOCMI</name>
<proteinExistence type="evidence at protein level"/>
<accession>P11738</accession>
<organism>
    <name type="scientific">Locusta migratoria</name>
    <name type="common">Migratory locust</name>
    <dbReference type="NCBI Taxonomy" id="7004"/>
    <lineage>
        <taxon>Eukaryota</taxon>
        <taxon>Metazoa</taxon>
        <taxon>Ecdysozoa</taxon>
        <taxon>Arthropoda</taxon>
        <taxon>Hexapoda</taxon>
        <taxon>Insecta</taxon>
        <taxon>Pterygota</taxon>
        <taxon>Neoptera</taxon>
        <taxon>Polyneoptera</taxon>
        <taxon>Orthoptera</taxon>
        <taxon>Caelifera</taxon>
        <taxon>Acrididea</taxon>
        <taxon>Acridomorpha</taxon>
        <taxon>Acridoidea</taxon>
        <taxon>Acrididae</taxon>
        <taxon>Oedipodinae</taxon>
        <taxon>Locusta</taxon>
    </lineage>
</organism>
<dbReference type="PIR" id="G24802">
    <property type="entry name" value="G24802"/>
</dbReference>
<dbReference type="SMR" id="P11738"/>
<dbReference type="GO" id="GO:0042302">
    <property type="term" value="F:structural constituent of cuticle"/>
    <property type="evidence" value="ECO:0007669"/>
    <property type="project" value="UniProtKB-KW"/>
</dbReference>
<protein>
    <recommendedName>
        <fullName>Cuticle protein 54</fullName>
    </recommendedName>
    <alternativeName>
        <fullName>LM-ACP 54</fullName>
        <shortName>LM-54</shortName>
    </alternativeName>
</protein>
<sequence>GYLGGYAAPAIAAAPAIAALPAASSIAANGY</sequence>